<dbReference type="EMBL" id="CP000671">
    <property type="protein sequence ID" value="ABQ97813.1"/>
    <property type="molecule type" value="Genomic_DNA"/>
</dbReference>
<dbReference type="SMR" id="A5UAL2"/>
<dbReference type="KEGG" id="hip:CGSHiEE_01665"/>
<dbReference type="HOGENOM" id="CLU_099590_0_1_6"/>
<dbReference type="Gene3D" id="3.10.450.50">
    <property type="match status" value="1"/>
</dbReference>
<dbReference type="HAMAP" id="MF_00612">
    <property type="entry name" value="UPF0225"/>
    <property type="match status" value="1"/>
</dbReference>
<dbReference type="InterPro" id="IPR032710">
    <property type="entry name" value="NTF2-like_dom_sf"/>
</dbReference>
<dbReference type="InterPro" id="IPR004027">
    <property type="entry name" value="SEC_C_motif"/>
</dbReference>
<dbReference type="InterPro" id="IPR023006">
    <property type="entry name" value="UPF0225"/>
</dbReference>
<dbReference type="InterPro" id="IPR048469">
    <property type="entry name" value="YchJ-like_M"/>
</dbReference>
<dbReference type="NCBIfam" id="NF001213">
    <property type="entry name" value="PRK00183.1"/>
    <property type="match status" value="1"/>
</dbReference>
<dbReference type="NCBIfam" id="NF002486">
    <property type="entry name" value="PRK01752.1"/>
    <property type="match status" value="1"/>
</dbReference>
<dbReference type="PANTHER" id="PTHR33747:SF1">
    <property type="entry name" value="ADENYLATE CYCLASE-ASSOCIATED CAP C-TERMINAL DOMAIN-CONTAINING PROTEIN"/>
    <property type="match status" value="1"/>
</dbReference>
<dbReference type="PANTHER" id="PTHR33747">
    <property type="entry name" value="UPF0225 PROTEIN SCO1677"/>
    <property type="match status" value="1"/>
</dbReference>
<dbReference type="Pfam" id="PF02810">
    <property type="entry name" value="SEC-C"/>
    <property type="match status" value="2"/>
</dbReference>
<dbReference type="Pfam" id="PF17775">
    <property type="entry name" value="YchJ_M-like"/>
    <property type="match status" value="1"/>
</dbReference>
<dbReference type="SUPFAM" id="SSF54427">
    <property type="entry name" value="NTF2-like"/>
    <property type="match status" value="1"/>
</dbReference>
<dbReference type="SUPFAM" id="SSF103642">
    <property type="entry name" value="Sec-C motif"/>
    <property type="match status" value="1"/>
</dbReference>
<gene>
    <name type="ordered locus">CGSHiEE_01665</name>
</gene>
<name>Y1665_HAEIE</name>
<accession>A5UAL2</accession>
<proteinExistence type="inferred from homology"/>
<sequence length="160" mass="18231">MSEISTALSEDCPCQSGHHYADCCGKFHLRQAFPETAEQLMRSRYTAYVLKNIPYIVVTTVPSQQTLLEPRLLQEWADNTTWLGLEILKTESLTKTQSAVEFKAIFQGEECEQAHQERSIFVKIEDRWYFVDPTVSLPTMKQPCVCGSGKKFKHCCGGFL</sequence>
<evidence type="ECO:0000255" key="1">
    <source>
        <dbReference type="HAMAP-Rule" id="MF_00612"/>
    </source>
</evidence>
<reference key="1">
    <citation type="journal article" date="2007" name="Genome Biol.">
        <title>Characterization and modeling of the Haemophilus influenzae core and supragenomes based on the complete genomic sequences of Rd and 12 clinical nontypeable strains.</title>
        <authorList>
            <person name="Hogg J.S."/>
            <person name="Hu F.Z."/>
            <person name="Janto B."/>
            <person name="Boissy R."/>
            <person name="Hayes J."/>
            <person name="Keefe R."/>
            <person name="Post J.C."/>
            <person name="Ehrlich G.D."/>
        </authorList>
    </citation>
    <scope>NUCLEOTIDE SEQUENCE [LARGE SCALE GENOMIC DNA]</scope>
    <source>
        <strain>PittEE</strain>
    </source>
</reference>
<organism>
    <name type="scientific">Haemophilus influenzae (strain PittEE)</name>
    <dbReference type="NCBI Taxonomy" id="374930"/>
    <lineage>
        <taxon>Bacteria</taxon>
        <taxon>Pseudomonadati</taxon>
        <taxon>Pseudomonadota</taxon>
        <taxon>Gammaproteobacteria</taxon>
        <taxon>Pasteurellales</taxon>
        <taxon>Pasteurellaceae</taxon>
        <taxon>Haemophilus</taxon>
    </lineage>
</organism>
<comment type="similarity">
    <text evidence="1">Belongs to the UPF0225 family.</text>
</comment>
<feature type="chain" id="PRO_1000056727" description="UPF0225 protein CGSHiEE_01665">
    <location>
        <begin position="1"/>
        <end position="160"/>
    </location>
</feature>
<protein>
    <recommendedName>
        <fullName evidence="1">UPF0225 protein CGSHiEE_01665</fullName>
    </recommendedName>
</protein>